<reference key="1">
    <citation type="journal article" date="2002" name="Mol. Phylogenet. Evol.">
        <title>Molecular systematics of sciurognathi (rodentia): the mitochondrial cytochrome b and 12S rRNA genes support the Anomaluroidea (Pedetidae and Anomaluridae).</title>
        <authorList>
            <person name="Montgelard C."/>
            <person name="Bentz S."/>
            <person name="Tirard C."/>
            <person name="Verneau O."/>
            <person name="Catzeflis F.M."/>
        </authorList>
    </citation>
    <scope>NUCLEOTIDE SEQUENCE [GENOMIC DNA]</scope>
</reference>
<gene>
    <name type="primary">MT-CYB</name>
    <name type="synonym">COB</name>
    <name type="synonym">CYTB</name>
    <name type="synonym">MTCYB</name>
</gene>
<keyword id="KW-0249">Electron transport</keyword>
<keyword id="KW-0349">Heme</keyword>
<keyword id="KW-0408">Iron</keyword>
<keyword id="KW-0472">Membrane</keyword>
<keyword id="KW-0479">Metal-binding</keyword>
<keyword id="KW-0496">Mitochondrion</keyword>
<keyword id="KW-0999">Mitochondrion inner membrane</keyword>
<keyword id="KW-0679">Respiratory chain</keyword>
<keyword id="KW-0812">Transmembrane</keyword>
<keyword id="KW-1133">Transmembrane helix</keyword>
<keyword id="KW-0813">Transport</keyword>
<keyword id="KW-0830">Ubiquinone</keyword>
<organism>
    <name type="scientific">Ctenodactylus vali</name>
    <name type="common">Val's gundi</name>
    <name type="synonym">Ctenodactylus gundi vali</name>
    <dbReference type="NCBI Taxonomy" id="92481"/>
    <lineage>
        <taxon>Eukaryota</taxon>
        <taxon>Metazoa</taxon>
        <taxon>Chordata</taxon>
        <taxon>Craniata</taxon>
        <taxon>Vertebrata</taxon>
        <taxon>Euteleostomi</taxon>
        <taxon>Mammalia</taxon>
        <taxon>Eutheria</taxon>
        <taxon>Euarchontoglires</taxon>
        <taxon>Glires</taxon>
        <taxon>Rodentia</taxon>
        <taxon>Hystricomorpha</taxon>
        <taxon>Ctenodactylidae</taxon>
        <taxon>Ctenodactylus</taxon>
    </lineage>
</organism>
<sequence length="379" mass="43174">MTNIRKTHPIMKIINHTFIDLPAPSNFSAWWNFGSLLGICLILQIMTGLFLAMHYTADTTSAFSSVTHICRDVNYGWMIRYMHANGASMFFICLFIHIGRGMYYGSYLLLETWNIGIILLFTTMATAFMGYVLPWGQMSFWGATVITNLLSAIPYIGTDLVQWIWGGFSVDKATLTRFFAFHFILPFMITALAMVHLLFLHETGSNNPTGINSDSDKIPFHPYYTMKDIMGFMMMFMTLLTLVLFSPDMLGDPDNYTPANPLNTPPHIKPEWYFLFAYAILRSIPNKLGGVLALVLSILILITLPMTHTAKQRSMMFRPMSQCMFWILVANLITLTWIGGQPVEPPFILIGQLASLSYFTIILIMMPLINLLENKLMKW</sequence>
<accession>Q8W9N7</accession>
<comment type="function">
    <text evidence="2">Component of the ubiquinol-cytochrome c reductase complex (complex III or cytochrome b-c1 complex) that is part of the mitochondrial respiratory chain. The b-c1 complex mediates electron transfer from ubiquinol to cytochrome c. Contributes to the generation of a proton gradient across the mitochondrial membrane that is then used for ATP synthesis.</text>
</comment>
<comment type="cofactor">
    <cofactor evidence="2">
        <name>heme b</name>
        <dbReference type="ChEBI" id="CHEBI:60344"/>
    </cofactor>
    <text evidence="2">Binds 2 heme b groups non-covalently.</text>
</comment>
<comment type="subunit">
    <text evidence="2">The cytochrome bc1 complex contains 11 subunits: 3 respiratory subunits (MT-CYB, CYC1 and UQCRFS1), 2 core proteins (UQCRC1 and UQCRC2) and 6 low-molecular weight proteins (UQCRH/QCR6, UQCRB/QCR7, UQCRQ/QCR8, UQCR10/QCR9, UQCR11/QCR10 and a cleavage product of UQCRFS1). This cytochrome bc1 complex then forms a dimer.</text>
</comment>
<comment type="subcellular location">
    <subcellularLocation>
        <location evidence="2">Mitochondrion inner membrane</location>
        <topology evidence="2">Multi-pass membrane protein</topology>
    </subcellularLocation>
</comment>
<comment type="miscellaneous">
    <text evidence="1">Heme 1 (or BL or b562) is low-potential and absorbs at about 562 nm, and heme 2 (or BH or b566) is high-potential and absorbs at about 566 nm.</text>
</comment>
<comment type="similarity">
    <text evidence="3 4">Belongs to the cytochrome b family.</text>
</comment>
<comment type="caution">
    <text evidence="2">The full-length protein contains only eight transmembrane helices, not nine as predicted by bioinformatics tools.</text>
</comment>
<protein>
    <recommendedName>
        <fullName>Cytochrome b</fullName>
    </recommendedName>
    <alternativeName>
        <fullName>Complex III subunit 3</fullName>
    </alternativeName>
    <alternativeName>
        <fullName>Complex III subunit III</fullName>
    </alternativeName>
    <alternativeName>
        <fullName>Cytochrome b-c1 complex subunit 3</fullName>
    </alternativeName>
    <alternativeName>
        <fullName>Ubiquinol-cytochrome-c reductase complex cytochrome b subunit</fullName>
    </alternativeName>
</protein>
<feature type="chain" id="PRO_0000257888" description="Cytochrome b">
    <location>
        <begin position="1"/>
        <end position="379"/>
    </location>
</feature>
<feature type="transmembrane region" description="Helical" evidence="2">
    <location>
        <begin position="33"/>
        <end position="53"/>
    </location>
</feature>
<feature type="transmembrane region" description="Helical" evidence="2">
    <location>
        <begin position="77"/>
        <end position="98"/>
    </location>
</feature>
<feature type="transmembrane region" description="Helical" evidence="2">
    <location>
        <begin position="113"/>
        <end position="133"/>
    </location>
</feature>
<feature type="transmembrane region" description="Helical" evidence="2">
    <location>
        <begin position="178"/>
        <end position="198"/>
    </location>
</feature>
<feature type="transmembrane region" description="Helical" evidence="2">
    <location>
        <begin position="226"/>
        <end position="246"/>
    </location>
</feature>
<feature type="transmembrane region" description="Helical" evidence="2">
    <location>
        <begin position="288"/>
        <end position="308"/>
    </location>
</feature>
<feature type="transmembrane region" description="Helical" evidence="2">
    <location>
        <begin position="320"/>
        <end position="340"/>
    </location>
</feature>
<feature type="transmembrane region" description="Helical" evidence="2">
    <location>
        <begin position="347"/>
        <end position="367"/>
    </location>
</feature>
<feature type="binding site" description="axial binding residue" evidence="2">
    <location>
        <position position="83"/>
    </location>
    <ligand>
        <name>heme b</name>
        <dbReference type="ChEBI" id="CHEBI:60344"/>
        <label>b562</label>
    </ligand>
    <ligandPart>
        <name>Fe</name>
        <dbReference type="ChEBI" id="CHEBI:18248"/>
    </ligandPart>
</feature>
<feature type="binding site" description="axial binding residue" evidence="2">
    <location>
        <position position="97"/>
    </location>
    <ligand>
        <name>heme b</name>
        <dbReference type="ChEBI" id="CHEBI:60344"/>
        <label>b566</label>
    </ligand>
    <ligandPart>
        <name>Fe</name>
        <dbReference type="ChEBI" id="CHEBI:18248"/>
    </ligandPart>
</feature>
<feature type="binding site" description="axial binding residue" evidence="2">
    <location>
        <position position="182"/>
    </location>
    <ligand>
        <name>heme b</name>
        <dbReference type="ChEBI" id="CHEBI:60344"/>
        <label>b562</label>
    </ligand>
    <ligandPart>
        <name>Fe</name>
        <dbReference type="ChEBI" id="CHEBI:18248"/>
    </ligandPart>
</feature>
<feature type="binding site" description="axial binding residue" evidence="2">
    <location>
        <position position="196"/>
    </location>
    <ligand>
        <name>heme b</name>
        <dbReference type="ChEBI" id="CHEBI:60344"/>
        <label>b566</label>
    </ligand>
    <ligandPart>
        <name>Fe</name>
        <dbReference type="ChEBI" id="CHEBI:18248"/>
    </ligandPart>
</feature>
<feature type="binding site" evidence="2">
    <location>
        <position position="201"/>
    </location>
    <ligand>
        <name>a ubiquinone</name>
        <dbReference type="ChEBI" id="CHEBI:16389"/>
    </ligand>
</feature>
<evidence type="ECO:0000250" key="1"/>
<evidence type="ECO:0000250" key="2">
    <source>
        <dbReference type="UniProtKB" id="P00157"/>
    </source>
</evidence>
<evidence type="ECO:0000255" key="3">
    <source>
        <dbReference type="PROSITE-ProRule" id="PRU00967"/>
    </source>
</evidence>
<evidence type="ECO:0000255" key="4">
    <source>
        <dbReference type="PROSITE-ProRule" id="PRU00968"/>
    </source>
</evidence>
<geneLocation type="mitochondrion"/>
<proteinExistence type="inferred from homology"/>
<dbReference type="EMBL" id="AJ389532">
    <property type="protein sequence ID" value="CAC80527.1"/>
    <property type="molecule type" value="Genomic_DNA"/>
</dbReference>
<dbReference type="SMR" id="Q8W9N7"/>
<dbReference type="GO" id="GO:0005743">
    <property type="term" value="C:mitochondrial inner membrane"/>
    <property type="evidence" value="ECO:0007669"/>
    <property type="project" value="UniProtKB-SubCell"/>
</dbReference>
<dbReference type="GO" id="GO:0045275">
    <property type="term" value="C:respiratory chain complex III"/>
    <property type="evidence" value="ECO:0007669"/>
    <property type="project" value="InterPro"/>
</dbReference>
<dbReference type="GO" id="GO:0046872">
    <property type="term" value="F:metal ion binding"/>
    <property type="evidence" value="ECO:0007669"/>
    <property type="project" value="UniProtKB-KW"/>
</dbReference>
<dbReference type="GO" id="GO:0008121">
    <property type="term" value="F:ubiquinol-cytochrome-c reductase activity"/>
    <property type="evidence" value="ECO:0007669"/>
    <property type="project" value="InterPro"/>
</dbReference>
<dbReference type="GO" id="GO:0006122">
    <property type="term" value="P:mitochondrial electron transport, ubiquinol to cytochrome c"/>
    <property type="evidence" value="ECO:0007669"/>
    <property type="project" value="TreeGrafter"/>
</dbReference>
<dbReference type="CDD" id="cd00290">
    <property type="entry name" value="cytochrome_b_C"/>
    <property type="match status" value="1"/>
</dbReference>
<dbReference type="CDD" id="cd00284">
    <property type="entry name" value="Cytochrome_b_N"/>
    <property type="match status" value="1"/>
</dbReference>
<dbReference type="FunFam" id="1.20.810.10:FF:000002">
    <property type="entry name" value="Cytochrome b"/>
    <property type="match status" value="1"/>
</dbReference>
<dbReference type="Gene3D" id="1.20.810.10">
    <property type="entry name" value="Cytochrome Bc1 Complex, Chain C"/>
    <property type="match status" value="1"/>
</dbReference>
<dbReference type="InterPro" id="IPR005798">
    <property type="entry name" value="Cyt_b/b6_C"/>
</dbReference>
<dbReference type="InterPro" id="IPR036150">
    <property type="entry name" value="Cyt_b/b6_C_sf"/>
</dbReference>
<dbReference type="InterPro" id="IPR005797">
    <property type="entry name" value="Cyt_b/b6_N"/>
</dbReference>
<dbReference type="InterPro" id="IPR027387">
    <property type="entry name" value="Cytb/b6-like_sf"/>
</dbReference>
<dbReference type="InterPro" id="IPR030689">
    <property type="entry name" value="Cytochrome_b"/>
</dbReference>
<dbReference type="InterPro" id="IPR048260">
    <property type="entry name" value="Cytochrome_b_C_euk/bac"/>
</dbReference>
<dbReference type="InterPro" id="IPR048259">
    <property type="entry name" value="Cytochrome_b_N_euk/bac"/>
</dbReference>
<dbReference type="InterPro" id="IPR016174">
    <property type="entry name" value="Di-haem_cyt_TM"/>
</dbReference>
<dbReference type="PANTHER" id="PTHR19271">
    <property type="entry name" value="CYTOCHROME B"/>
    <property type="match status" value="1"/>
</dbReference>
<dbReference type="PANTHER" id="PTHR19271:SF16">
    <property type="entry name" value="CYTOCHROME B"/>
    <property type="match status" value="1"/>
</dbReference>
<dbReference type="Pfam" id="PF00032">
    <property type="entry name" value="Cytochrom_B_C"/>
    <property type="match status" value="1"/>
</dbReference>
<dbReference type="Pfam" id="PF00033">
    <property type="entry name" value="Cytochrome_B"/>
    <property type="match status" value="1"/>
</dbReference>
<dbReference type="PIRSF" id="PIRSF038885">
    <property type="entry name" value="COB"/>
    <property type="match status" value="1"/>
</dbReference>
<dbReference type="SUPFAM" id="SSF81648">
    <property type="entry name" value="a domain/subunit of cytochrome bc1 complex (Ubiquinol-cytochrome c reductase)"/>
    <property type="match status" value="1"/>
</dbReference>
<dbReference type="SUPFAM" id="SSF81342">
    <property type="entry name" value="Transmembrane di-heme cytochromes"/>
    <property type="match status" value="1"/>
</dbReference>
<dbReference type="PROSITE" id="PS51003">
    <property type="entry name" value="CYTB_CTER"/>
    <property type="match status" value="1"/>
</dbReference>
<dbReference type="PROSITE" id="PS51002">
    <property type="entry name" value="CYTB_NTER"/>
    <property type="match status" value="1"/>
</dbReference>
<name>CYB_CTEVA</name>